<keyword id="KW-0067">ATP-binding</keyword>
<keyword id="KW-0963">Cytoplasm</keyword>
<keyword id="KW-0418">Kinase</keyword>
<keyword id="KW-0520">NAD</keyword>
<keyword id="KW-0521">NADP</keyword>
<keyword id="KW-0547">Nucleotide-binding</keyword>
<keyword id="KW-1185">Reference proteome</keyword>
<keyword id="KW-0808">Transferase</keyword>
<dbReference type="EC" id="2.7.1.23" evidence="1"/>
<dbReference type="EMBL" id="CU928145">
    <property type="protein sequence ID" value="CAU98770.1"/>
    <property type="molecule type" value="Genomic_DNA"/>
</dbReference>
<dbReference type="RefSeq" id="WP_001059169.1">
    <property type="nucleotide sequence ID" value="NC_011748.1"/>
</dbReference>
<dbReference type="SMR" id="B7LDK3"/>
<dbReference type="GeneID" id="93774464"/>
<dbReference type="KEGG" id="eck:EC55989_2903"/>
<dbReference type="HOGENOM" id="CLU_008831_0_1_6"/>
<dbReference type="Proteomes" id="UP000000746">
    <property type="component" value="Chromosome"/>
</dbReference>
<dbReference type="GO" id="GO:0005737">
    <property type="term" value="C:cytoplasm"/>
    <property type="evidence" value="ECO:0007669"/>
    <property type="project" value="UniProtKB-SubCell"/>
</dbReference>
<dbReference type="GO" id="GO:0005524">
    <property type="term" value="F:ATP binding"/>
    <property type="evidence" value="ECO:0007669"/>
    <property type="project" value="UniProtKB-KW"/>
</dbReference>
<dbReference type="GO" id="GO:0046872">
    <property type="term" value="F:metal ion binding"/>
    <property type="evidence" value="ECO:0007669"/>
    <property type="project" value="UniProtKB-UniRule"/>
</dbReference>
<dbReference type="GO" id="GO:0051287">
    <property type="term" value="F:NAD binding"/>
    <property type="evidence" value="ECO:0007669"/>
    <property type="project" value="UniProtKB-ARBA"/>
</dbReference>
<dbReference type="GO" id="GO:0003951">
    <property type="term" value="F:NAD+ kinase activity"/>
    <property type="evidence" value="ECO:0007669"/>
    <property type="project" value="UniProtKB-UniRule"/>
</dbReference>
<dbReference type="GO" id="GO:0019674">
    <property type="term" value="P:NAD metabolic process"/>
    <property type="evidence" value="ECO:0007669"/>
    <property type="project" value="InterPro"/>
</dbReference>
<dbReference type="GO" id="GO:0006741">
    <property type="term" value="P:NADP biosynthetic process"/>
    <property type="evidence" value="ECO:0007669"/>
    <property type="project" value="UniProtKB-UniRule"/>
</dbReference>
<dbReference type="FunFam" id="2.60.200.30:FF:000001">
    <property type="entry name" value="NAD kinase"/>
    <property type="match status" value="1"/>
</dbReference>
<dbReference type="FunFam" id="3.40.50.10330:FF:000004">
    <property type="entry name" value="NAD kinase"/>
    <property type="match status" value="1"/>
</dbReference>
<dbReference type="Gene3D" id="3.40.50.10330">
    <property type="entry name" value="Probable inorganic polyphosphate/atp-NAD kinase, domain 1"/>
    <property type="match status" value="1"/>
</dbReference>
<dbReference type="Gene3D" id="2.60.200.30">
    <property type="entry name" value="Probable inorganic polyphosphate/atp-NAD kinase, domain 2"/>
    <property type="match status" value="1"/>
</dbReference>
<dbReference type="HAMAP" id="MF_00361">
    <property type="entry name" value="NAD_kinase"/>
    <property type="match status" value="1"/>
</dbReference>
<dbReference type="InterPro" id="IPR017438">
    <property type="entry name" value="ATP-NAD_kinase_N"/>
</dbReference>
<dbReference type="InterPro" id="IPR017437">
    <property type="entry name" value="ATP-NAD_kinase_PpnK-typ_C"/>
</dbReference>
<dbReference type="InterPro" id="IPR016064">
    <property type="entry name" value="NAD/diacylglycerol_kinase_sf"/>
</dbReference>
<dbReference type="InterPro" id="IPR002504">
    <property type="entry name" value="NADK"/>
</dbReference>
<dbReference type="NCBIfam" id="NF002306">
    <property type="entry name" value="PRK01231.1"/>
    <property type="match status" value="1"/>
</dbReference>
<dbReference type="NCBIfam" id="NF002893">
    <property type="entry name" value="PRK03378.1"/>
    <property type="match status" value="1"/>
</dbReference>
<dbReference type="PANTHER" id="PTHR20275">
    <property type="entry name" value="NAD KINASE"/>
    <property type="match status" value="1"/>
</dbReference>
<dbReference type="PANTHER" id="PTHR20275:SF0">
    <property type="entry name" value="NAD KINASE"/>
    <property type="match status" value="1"/>
</dbReference>
<dbReference type="Pfam" id="PF01513">
    <property type="entry name" value="NAD_kinase"/>
    <property type="match status" value="1"/>
</dbReference>
<dbReference type="Pfam" id="PF20143">
    <property type="entry name" value="NAD_kinase_C"/>
    <property type="match status" value="1"/>
</dbReference>
<dbReference type="SUPFAM" id="SSF111331">
    <property type="entry name" value="NAD kinase/diacylglycerol kinase-like"/>
    <property type="match status" value="1"/>
</dbReference>
<comment type="function">
    <text evidence="1">Involved in the regulation of the intracellular balance of NAD and NADP, and is a key enzyme in the biosynthesis of NADP. Catalyzes specifically the phosphorylation on 2'-hydroxyl of the adenosine moiety of NAD to yield NADP.</text>
</comment>
<comment type="catalytic activity">
    <reaction evidence="1">
        <text>NAD(+) + ATP = ADP + NADP(+) + H(+)</text>
        <dbReference type="Rhea" id="RHEA:18629"/>
        <dbReference type="ChEBI" id="CHEBI:15378"/>
        <dbReference type="ChEBI" id="CHEBI:30616"/>
        <dbReference type="ChEBI" id="CHEBI:57540"/>
        <dbReference type="ChEBI" id="CHEBI:58349"/>
        <dbReference type="ChEBI" id="CHEBI:456216"/>
        <dbReference type="EC" id="2.7.1.23"/>
    </reaction>
</comment>
<comment type="cofactor">
    <cofactor evidence="1">
        <name>a divalent metal cation</name>
        <dbReference type="ChEBI" id="CHEBI:60240"/>
    </cofactor>
</comment>
<comment type="subcellular location">
    <subcellularLocation>
        <location evidence="1">Cytoplasm</location>
    </subcellularLocation>
</comment>
<comment type="similarity">
    <text evidence="1">Belongs to the NAD kinase family.</text>
</comment>
<name>NADK_ECO55</name>
<accession>B7LDK3</accession>
<proteinExistence type="inferred from homology"/>
<organism>
    <name type="scientific">Escherichia coli (strain 55989 / EAEC)</name>
    <dbReference type="NCBI Taxonomy" id="585055"/>
    <lineage>
        <taxon>Bacteria</taxon>
        <taxon>Pseudomonadati</taxon>
        <taxon>Pseudomonadota</taxon>
        <taxon>Gammaproteobacteria</taxon>
        <taxon>Enterobacterales</taxon>
        <taxon>Enterobacteriaceae</taxon>
        <taxon>Escherichia</taxon>
    </lineage>
</organism>
<protein>
    <recommendedName>
        <fullName evidence="1">NAD kinase</fullName>
        <ecNumber evidence="1">2.7.1.23</ecNumber>
    </recommendedName>
    <alternativeName>
        <fullName evidence="1">ATP-dependent NAD kinase</fullName>
    </alternativeName>
</protein>
<sequence>MNNHFKCIGIVGHPRHPTALTTHEMLYRWLCTKGYEVIVEQQIAHELQLKNVKTGTLAEIGQLADLAVVVGGDGNMLGAARTLARYDIKVIGINRGNLGFLTDLDPDNAQQQLADVLEGHYISEKRFLLEAQVCQQDCQKRISTAINEVVLHPGKVAHMIEFEVYIDEIFAFSQRSDGLIISTPTGSTAYSLSAGGPILTPSLDAITLVPMFPHTLSARPLVINSSSTIRLRFSHRRNDLEISCDSQIALPIQEGEDVLIRRCDYHLNLIHPKDYSYFNTLSTKLGWSKKLF</sequence>
<gene>
    <name evidence="1" type="primary">nadK</name>
    <name type="ordered locus">EC55989_2903</name>
</gene>
<reference key="1">
    <citation type="journal article" date="2009" name="PLoS Genet.">
        <title>Organised genome dynamics in the Escherichia coli species results in highly diverse adaptive paths.</title>
        <authorList>
            <person name="Touchon M."/>
            <person name="Hoede C."/>
            <person name="Tenaillon O."/>
            <person name="Barbe V."/>
            <person name="Baeriswyl S."/>
            <person name="Bidet P."/>
            <person name="Bingen E."/>
            <person name="Bonacorsi S."/>
            <person name="Bouchier C."/>
            <person name="Bouvet O."/>
            <person name="Calteau A."/>
            <person name="Chiapello H."/>
            <person name="Clermont O."/>
            <person name="Cruveiller S."/>
            <person name="Danchin A."/>
            <person name="Diard M."/>
            <person name="Dossat C."/>
            <person name="Karoui M.E."/>
            <person name="Frapy E."/>
            <person name="Garry L."/>
            <person name="Ghigo J.M."/>
            <person name="Gilles A.M."/>
            <person name="Johnson J."/>
            <person name="Le Bouguenec C."/>
            <person name="Lescat M."/>
            <person name="Mangenot S."/>
            <person name="Martinez-Jehanne V."/>
            <person name="Matic I."/>
            <person name="Nassif X."/>
            <person name="Oztas S."/>
            <person name="Petit M.A."/>
            <person name="Pichon C."/>
            <person name="Rouy Z."/>
            <person name="Ruf C.S."/>
            <person name="Schneider D."/>
            <person name="Tourret J."/>
            <person name="Vacherie B."/>
            <person name="Vallenet D."/>
            <person name="Medigue C."/>
            <person name="Rocha E.P.C."/>
            <person name="Denamur E."/>
        </authorList>
    </citation>
    <scope>NUCLEOTIDE SEQUENCE [LARGE SCALE GENOMIC DNA]</scope>
    <source>
        <strain>55989 / EAEC</strain>
    </source>
</reference>
<feature type="chain" id="PRO_1000133571" description="NAD kinase">
    <location>
        <begin position="1"/>
        <end position="292"/>
    </location>
</feature>
<feature type="active site" description="Proton acceptor" evidence="1">
    <location>
        <position position="73"/>
    </location>
</feature>
<feature type="binding site" evidence="1">
    <location>
        <begin position="73"/>
        <end position="74"/>
    </location>
    <ligand>
        <name>NAD(+)</name>
        <dbReference type="ChEBI" id="CHEBI:57540"/>
    </ligand>
</feature>
<feature type="binding site" evidence="1">
    <location>
        <begin position="147"/>
        <end position="148"/>
    </location>
    <ligand>
        <name>NAD(+)</name>
        <dbReference type="ChEBI" id="CHEBI:57540"/>
    </ligand>
</feature>
<feature type="binding site" evidence="1">
    <location>
        <position position="158"/>
    </location>
    <ligand>
        <name>NAD(+)</name>
        <dbReference type="ChEBI" id="CHEBI:57540"/>
    </ligand>
</feature>
<feature type="binding site" evidence="1">
    <location>
        <position position="175"/>
    </location>
    <ligand>
        <name>NAD(+)</name>
        <dbReference type="ChEBI" id="CHEBI:57540"/>
    </ligand>
</feature>
<feature type="binding site" evidence="1">
    <location>
        <position position="177"/>
    </location>
    <ligand>
        <name>NAD(+)</name>
        <dbReference type="ChEBI" id="CHEBI:57540"/>
    </ligand>
</feature>
<feature type="binding site" evidence="1">
    <location>
        <begin position="188"/>
        <end position="193"/>
    </location>
    <ligand>
        <name>NAD(+)</name>
        <dbReference type="ChEBI" id="CHEBI:57540"/>
    </ligand>
</feature>
<feature type="binding site" evidence="1">
    <location>
        <position position="247"/>
    </location>
    <ligand>
        <name>NAD(+)</name>
        <dbReference type="ChEBI" id="CHEBI:57540"/>
    </ligand>
</feature>
<evidence type="ECO:0000255" key="1">
    <source>
        <dbReference type="HAMAP-Rule" id="MF_00361"/>
    </source>
</evidence>